<feature type="chain" id="PRO_0000197546" description="Integrase/recombinase xerD homolog">
    <location>
        <begin position="1"/>
        <end position="341"/>
    </location>
</feature>
<feature type="domain" description="Core-binding (CB)" evidence="2">
    <location>
        <begin position="21"/>
        <end position="111"/>
    </location>
</feature>
<feature type="domain" description="Tyr recombinase" evidence="1">
    <location>
        <begin position="140"/>
        <end position="336"/>
    </location>
</feature>
<feature type="active site" evidence="1">
    <location>
        <position position="180"/>
    </location>
</feature>
<feature type="active site" evidence="1">
    <location>
        <position position="207"/>
    </location>
</feature>
<feature type="active site" evidence="1">
    <location>
        <position position="288"/>
    </location>
</feature>
<feature type="active site" evidence="1">
    <location>
        <position position="291"/>
    </location>
</feature>
<feature type="active site" evidence="1">
    <location>
        <position position="314"/>
    </location>
</feature>
<feature type="active site" description="O-(3'-phospho-DNA)-tyrosine intermediate" evidence="1">
    <location>
        <position position="323"/>
    </location>
</feature>
<protein>
    <recommendedName>
        <fullName>Integrase/recombinase xerD homolog</fullName>
    </recommendedName>
</protein>
<name>XERD_SELRU</name>
<gene>
    <name type="primary">xerD</name>
</gene>
<evidence type="ECO:0000255" key="1">
    <source>
        <dbReference type="PROSITE-ProRule" id="PRU01246"/>
    </source>
</evidence>
<evidence type="ECO:0000255" key="2">
    <source>
        <dbReference type="PROSITE-ProRule" id="PRU01248"/>
    </source>
</evidence>
<evidence type="ECO:0000305" key="3"/>
<keyword id="KW-0229">DNA integration</keyword>
<keyword id="KW-0233">DNA recombination</keyword>
<keyword id="KW-0238">DNA-binding</keyword>
<keyword id="KW-1179">Viral genome integration</keyword>
<keyword id="KW-1160">Virus entry into host cell</keyword>
<reference key="1">
    <citation type="journal article" date="2000" name="J. Bacteriol.">
        <title>Gene cloning and molecular characterization of lysine decarboxylase from Selenomonas ruminantium delineate its evolutionary relationship to ornithine decarboxylases from eukaryotes.</title>
        <authorList>
            <person name="Takatsuka Y."/>
            <person name="Yamaguchi Y."/>
            <person name="Ono M."/>
            <person name="Kamio Y."/>
        </authorList>
    </citation>
    <scope>NUCLEOTIDE SEQUENCE [GENOMIC DNA]</scope>
    <source>
        <strain>Subsp. lactilytica</strain>
    </source>
</reference>
<comment type="similarity">
    <text evidence="3">Belongs to the 'phage' integrase family.</text>
</comment>
<dbReference type="EMBL" id="AB011029">
    <property type="protein sequence ID" value="BAA24921.1"/>
    <property type="molecule type" value="Genomic_DNA"/>
</dbReference>
<dbReference type="SMR" id="O50655"/>
<dbReference type="STRING" id="971.SAMN02910356_00248"/>
<dbReference type="GO" id="GO:0003677">
    <property type="term" value="F:DNA binding"/>
    <property type="evidence" value="ECO:0007669"/>
    <property type="project" value="UniProtKB-KW"/>
</dbReference>
<dbReference type="GO" id="GO:0015074">
    <property type="term" value="P:DNA integration"/>
    <property type="evidence" value="ECO:0007669"/>
    <property type="project" value="UniProtKB-KW"/>
</dbReference>
<dbReference type="GO" id="GO:0006310">
    <property type="term" value="P:DNA recombination"/>
    <property type="evidence" value="ECO:0007669"/>
    <property type="project" value="UniProtKB-KW"/>
</dbReference>
<dbReference type="GO" id="GO:0075713">
    <property type="term" value="P:establishment of integrated proviral latency"/>
    <property type="evidence" value="ECO:0007669"/>
    <property type="project" value="UniProtKB-KW"/>
</dbReference>
<dbReference type="GO" id="GO:0046718">
    <property type="term" value="P:symbiont entry into host cell"/>
    <property type="evidence" value="ECO:0007669"/>
    <property type="project" value="UniProtKB-KW"/>
</dbReference>
<dbReference type="GO" id="GO:0044826">
    <property type="term" value="P:viral genome integration into host DNA"/>
    <property type="evidence" value="ECO:0007669"/>
    <property type="project" value="UniProtKB-KW"/>
</dbReference>
<dbReference type="CDD" id="cd00799">
    <property type="entry name" value="INT_Cre_C"/>
    <property type="match status" value="1"/>
</dbReference>
<dbReference type="Gene3D" id="1.10.150.130">
    <property type="match status" value="1"/>
</dbReference>
<dbReference type="Gene3D" id="1.10.443.10">
    <property type="entry name" value="Intergrase catalytic core"/>
    <property type="match status" value="1"/>
</dbReference>
<dbReference type="InterPro" id="IPR044068">
    <property type="entry name" value="CB"/>
</dbReference>
<dbReference type="InterPro" id="IPR011010">
    <property type="entry name" value="DNA_brk_join_enz"/>
</dbReference>
<dbReference type="InterPro" id="IPR013762">
    <property type="entry name" value="Integrase-like_cat_sf"/>
</dbReference>
<dbReference type="InterPro" id="IPR002104">
    <property type="entry name" value="Integrase_catalytic"/>
</dbReference>
<dbReference type="InterPro" id="IPR010998">
    <property type="entry name" value="Integrase_recombinase_N"/>
</dbReference>
<dbReference type="InterPro" id="IPR052925">
    <property type="entry name" value="Phage_Integrase-like_Recomb"/>
</dbReference>
<dbReference type="PANTHER" id="PTHR34605:SF4">
    <property type="entry name" value="DNA ADENINE METHYLTRANSFERASE"/>
    <property type="match status" value="1"/>
</dbReference>
<dbReference type="PANTHER" id="PTHR34605">
    <property type="entry name" value="PHAGE_INTEGRASE DOMAIN-CONTAINING PROTEIN"/>
    <property type="match status" value="1"/>
</dbReference>
<dbReference type="Pfam" id="PF00589">
    <property type="entry name" value="Phage_integrase"/>
    <property type="match status" value="1"/>
</dbReference>
<dbReference type="SUPFAM" id="SSF56349">
    <property type="entry name" value="DNA breaking-rejoining enzymes"/>
    <property type="match status" value="1"/>
</dbReference>
<dbReference type="SUPFAM" id="SSF47823">
    <property type="entry name" value="lambda integrase-like, N-terminal domain"/>
    <property type="match status" value="1"/>
</dbReference>
<dbReference type="PROSITE" id="PS51900">
    <property type="entry name" value="CB"/>
    <property type="match status" value="1"/>
</dbReference>
<dbReference type="PROSITE" id="PS51898">
    <property type="entry name" value="TYR_RECOMBINASE"/>
    <property type="match status" value="1"/>
</dbReference>
<proteinExistence type="inferred from homology"/>
<accession>O50655</accession>
<organism>
    <name type="scientific">Selenomonas ruminantium</name>
    <dbReference type="NCBI Taxonomy" id="971"/>
    <lineage>
        <taxon>Bacteria</taxon>
        <taxon>Bacillati</taxon>
        <taxon>Bacillota</taxon>
        <taxon>Negativicutes</taxon>
        <taxon>Selenomonadales</taxon>
        <taxon>Selenomonadaceae</taxon>
        <taxon>Selenomonas</taxon>
    </lineage>
</organism>
<sequence>MLLYILLIESRFIMKIKDNFMLIKNARIENNERLSLKAKRRLEKSKADNTLKAYACDWSDFSDWCQYHGVTDLPASPETIVNYINDLADDAKANTVSRRVTAISENHIAAGFSGRHNPAKDGMVRAAMSAIRREKGTFQRGKSPILMETLYLLADLFDEEKLSGLRDKALIYLGFAGAFRRSELVHIQYEDLTFTPQGVIIFMAHSKGDQLGHGEQIAIPYAPQAEICAVRALKKWLDTAQIHRGPIFRPITRVQSLRNTQLSDKSVALIVKKYVGLAGLDEHLFAGHSLRRGFATSAAQHDIDALTIMRQTRHKSEKMVHRYIEQGNIFKDNALNRMYNK</sequence>